<keyword id="KW-0025">Alternative splicing</keyword>
<keyword id="KW-0472">Membrane</keyword>
<keyword id="KW-1267">Proteomics identification</keyword>
<keyword id="KW-1185">Reference proteome</keyword>
<keyword id="KW-0812">Transmembrane</keyword>
<keyword id="KW-1133">Transmembrane helix</keyword>
<gene>
    <name type="primary">TMEM171</name>
</gene>
<reference key="1">
    <citation type="journal article" date="2002" name="FEBS Lett.">
        <title>Identification of G protein-coupled receptor genes from the human genome sequence.</title>
        <authorList>
            <person name="Takeda S."/>
            <person name="Kadowaki S."/>
            <person name="Haga T."/>
            <person name="Takaesu H."/>
            <person name="Mitaku S."/>
        </authorList>
    </citation>
    <scope>NUCLEOTIDE SEQUENCE [GENOMIC DNA]</scope>
    <scope>VARIANTS GLY-86 AND LYS-139</scope>
</reference>
<reference key="2">
    <citation type="journal article" date="2004" name="Genome Res.">
        <title>The status, quality, and expansion of the NIH full-length cDNA project: the Mammalian Gene Collection (MGC).</title>
        <authorList>
            <consortium name="The MGC Project Team"/>
        </authorList>
    </citation>
    <scope>NUCLEOTIDE SEQUENCE [LARGE SCALE MRNA] (ISOFORMS 1 AND 2)</scope>
    <scope>VARIANT LEU-23</scope>
    <source>
        <tissue>Brain</tissue>
        <tissue>Skin</tissue>
    </source>
</reference>
<evidence type="ECO:0000255" key="1"/>
<evidence type="ECO:0000256" key="2">
    <source>
        <dbReference type="SAM" id="MobiDB-lite"/>
    </source>
</evidence>
<evidence type="ECO:0000269" key="3">
    <source>
    </source>
</evidence>
<evidence type="ECO:0000269" key="4">
    <source>
    </source>
</evidence>
<evidence type="ECO:0000303" key="5">
    <source>
    </source>
</evidence>
<evidence type="ECO:0000305" key="6"/>
<organism>
    <name type="scientific">Homo sapiens</name>
    <name type="common">Human</name>
    <dbReference type="NCBI Taxonomy" id="9606"/>
    <lineage>
        <taxon>Eukaryota</taxon>
        <taxon>Metazoa</taxon>
        <taxon>Chordata</taxon>
        <taxon>Craniata</taxon>
        <taxon>Vertebrata</taxon>
        <taxon>Euteleostomi</taxon>
        <taxon>Mammalia</taxon>
        <taxon>Eutheria</taxon>
        <taxon>Euarchontoglires</taxon>
        <taxon>Primates</taxon>
        <taxon>Haplorrhini</taxon>
        <taxon>Catarrhini</taxon>
        <taxon>Hominidae</taxon>
        <taxon>Homo</taxon>
    </lineage>
</organism>
<dbReference type="EMBL" id="AB083614">
    <property type="protein sequence ID" value="BAB89327.1"/>
    <property type="status" value="ALT_SEQ"/>
    <property type="molecule type" value="Genomic_DNA"/>
</dbReference>
<dbReference type="EMBL" id="BC018083">
    <property type="protein sequence ID" value="AAH18083.2"/>
    <property type="molecule type" value="mRNA"/>
</dbReference>
<dbReference type="EMBL" id="BC035310">
    <property type="protein sequence ID" value="AAH35310.1"/>
    <property type="molecule type" value="mRNA"/>
</dbReference>
<dbReference type="CCDS" id="CCDS4017.1">
    <molecule id="Q8WVE6-1"/>
</dbReference>
<dbReference type="CCDS" id="CCDS54869.1">
    <molecule id="Q8WVE6-2"/>
</dbReference>
<dbReference type="RefSeq" id="NP_001154814.1">
    <molecule id="Q8WVE6-2"/>
    <property type="nucleotide sequence ID" value="NM_001161342.3"/>
</dbReference>
<dbReference type="RefSeq" id="NP_775761.4">
    <molecule id="Q8WVE6-1"/>
    <property type="nucleotide sequence ID" value="NM_173490.7"/>
</dbReference>
<dbReference type="BioGRID" id="126392">
    <property type="interactions" value="79"/>
</dbReference>
<dbReference type="FunCoup" id="Q8WVE6">
    <property type="interactions" value="40"/>
</dbReference>
<dbReference type="IntAct" id="Q8WVE6">
    <property type="interactions" value="65"/>
</dbReference>
<dbReference type="STRING" id="9606.ENSP00000415030"/>
<dbReference type="GlyGen" id="Q8WVE6">
    <property type="glycosylation" value="2 sites, 1 O-linked glycan (1 site)"/>
</dbReference>
<dbReference type="iPTMnet" id="Q8WVE6"/>
<dbReference type="PhosphoSitePlus" id="Q8WVE6"/>
<dbReference type="BioMuta" id="TMEM171"/>
<dbReference type="DMDM" id="115311873"/>
<dbReference type="MassIVE" id="Q8WVE6"/>
<dbReference type="PaxDb" id="9606-ENSP00000415030"/>
<dbReference type="PeptideAtlas" id="Q8WVE6"/>
<dbReference type="ProteomicsDB" id="74782">
    <molecule id="Q8WVE6-1"/>
</dbReference>
<dbReference type="Antibodypedia" id="24256">
    <property type="antibodies" value="19 antibodies from 11 providers"/>
</dbReference>
<dbReference type="DNASU" id="134285"/>
<dbReference type="Ensembl" id="ENST00000287773.5">
    <molecule id="Q8WVE6-2"/>
    <property type="protein sequence ID" value="ENSP00000287773.5"/>
    <property type="gene ID" value="ENSG00000157111.13"/>
</dbReference>
<dbReference type="Ensembl" id="ENST00000454765.7">
    <molecule id="Q8WVE6-1"/>
    <property type="protein sequence ID" value="ENSP00000415030.2"/>
    <property type="gene ID" value="ENSG00000157111.13"/>
</dbReference>
<dbReference type="GeneID" id="134285"/>
<dbReference type="KEGG" id="hsa:134285"/>
<dbReference type="MANE-Select" id="ENST00000454765.7">
    <property type="protein sequence ID" value="ENSP00000415030.2"/>
    <property type="RefSeq nucleotide sequence ID" value="NM_173490.8"/>
    <property type="RefSeq protein sequence ID" value="NP_775761.4"/>
</dbReference>
<dbReference type="UCSC" id="uc003kcm.3">
    <molecule id="Q8WVE6-1"/>
    <property type="organism name" value="human"/>
</dbReference>
<dbReference type="AGR" id="HGNC:27031"/>
<dbReference type="CTD" id="134285"/>
<dbReference type="DisGeNET" id="134285"/>
<dbReference type="GeneCards" id="TMEM171"/>
<dbReference type="HGNC" id="HGNC:27031">
    <property type="gene designation" value="TMEM171"/>
</dbReference>
<dbReference type="HPA" id="ENSG00000157111">
    <property type="expression patterns" value="Group enriched (intestine, kidney, lymphoid tissue, stomach, thyroid gland)"/>
</dbReference>
<dbReference type="neXtProt" id="NX_Q8WVE6"/>
<dbReference type="OpenTargets" id="ENSG00000157111"/>
<dbReference type="PharmGKB" id="PA162405933"/>
<dbReference type="VEuPathDB" id="HostDB:ENSG00000157111"/>
<dbReference type="eggNOG" id="ENOG502QRR0">
    <property type="taxonomic scope" value="Eukaryota"/>
</dbReference>
<dbReference type="GeneTree" id="ENSGT00390000017024"/>
<dbReference type="HOGENOM" id="CLU_900031_0_0_1"/>
<dbReference type="InParanoid" id="Q8WVE6"/>
<dbReference type="OMA" id="WHTIQLN"/>
<dbReference type="OrthoDB" id="9940935at2759"/>
<dbReference type="PAN-GO" id="Q8WVE6">
    <property type="GO annotations" value="0 GO annotations based on evolutionary models"/>
</dbReference>
<dbReference type="PhylomeDB" id="Q8WVE6"/>
<dbReference type="TreeFam" id="TF335590"/>
<dbReference type="PathwayCommons" id="Q8WVE6"/>
<dbReference type="SignaLink" id="Q8WVE6"/>
<dbReference type="BioGRID-ORCS" id="134285">
    <property type="hits" value="12 hits in 1138 CRISPR screens"/>
</dbReference>
<dbReference type="GenomeRNAi" id="134285"/>
<dbReference type="Pharos" id="Q8WVE6">
    <property type="development level" value="Tdark"/>
</dbReference>
<dbReference type="PRO" id="PR:Q8WVE6"/>
<dbReference type="Proteomes" id="UP000005640">
    <property type="component" value="Chromosome 5"/>
</dbReference>
<dbReference type="RNAct" id="Q8WVE6">
    <property type="molecule type" value="protein"/>
</dbReference>
<dbReference type="Bgee" id="ENSG00000157111">
    <property type="expression patterns" value="Expressed in mucosa of transverse colon and 109 other cell types or tissues"/>
</dbReference>
<dbReference type="GO" id="GO:0016020">
    <property type="term" value="C:membrane"/>
    <property type="evidence" value="ECO:0007669"/>
    <property type="project" value="UniProtKB-SubCell"/>
</dbReference>
<dbReference type="InterPro" id="IPR029173">
    <property type="entry name" value="TMEM171"/>
</dbReference>
<dbReference type="PANTHER" id="PTHR31617">
    <property type="entry name" value="TRANSMEMBRANE PROTEIN 171"/>
    <property type="match status" value="1"/>
</dbReference>
<dbReference type="PANTHER" id="PTHR31617:SF0">
    <property type="entry name" value="TRANSMEMBRANE PROTEIN 171"/>
    <property type="match status" value="1"/>
</dbReference>
<dbReference type="Pfam" id="PF15471">
    <property type="entry name" value="TMEM171"/>
    <property type="match status" value="1"/>
</dbReference>
<feature type="chain" id="PRO_0000249570" description="Transmembrane protein 171">
    <location>
        <begin position="1"/>
        <end position="324"/>
    </location>
</feature>
<feature type="transmembrane region" description="Helical" evidence="1">
    <location>
        <begin position="22"/>
        <end position="42"/>
    </location>
</feature>
<feature type="transmembrane region" description="Helical" evidence="1">
    <location>
        <begin position="57"/>
        <end position="77"/>
    </location>
</feature>
<feature type="transmembrane region" description="Helical" evidence="1">
    <location>
        <begin position="113"/>
        <end position="133"/>
    </location>
</feature>
<feature type="transmembrane region" description="Helical" evidence="1">
    <location>
        <begin position="160"/>
        <end position="180"/>
    </location>
</feature>
<feature type="region of interest" description="Disordered" evidence="2">
    <location>
        <begin position="229"/>
        <end position="248"/>
    </location>
</feature>
<feature type="region of interest" description="Disordered" evidence="2">
    <location>
        <begin position="279"/>
        <end position="304"/>
    </location>
</feature>
<feature type="compositionally biased region" description="Low complexity" evidence="2">
    <location>
        <begin position="229"/>
        <end position="239"/>
    </location>
</feature>
<feature type="compositionally biased region" description="Polar residues" evidence="2">
    <location>
        <begin position="279"/>
        <end position="291"/>
    </location>
</feature>
<feature type="splice variant" id="VSP_020520" description="In isoform 2." evidence="5">
    <location>
        <position position="262"/>
    </location>
</feature>
<feature type="sequence variant" id="VAR_057003" description="In dbSNP:rs638333." evidence="4">
    <original>F</original>
    <variation>L</variation>
    <location>
        <position position="23"/>
    </location>
</feature>
<feature type="sequence variant" id="VAR_057004" description="In dbSNP:rs637450." evidence="3">
    <original>R</original>
    <variation>G</variation>
    <location>
        <position position="86"/>
    </location>
</feature>
<feature type="sequence variant" id="VAR_057005" description="In dbSNP:rs636926." evidence="3">
    <original>N</original>
    <variation>K</variation>
    <location>
        <position position="139"/>
    </location>
</feature>
<feature type="sequence conflict" description="In Ref. 2; AAH35310." evidence="6" ref="2">
    <original>P</original>
    <variation>S</variation>
    <location>
        <position position="323"/>
    </location>
</feature>
<name>TM171_HUMAN</name>
<sequence length="324" mass="34760">MSPAAAAEPDGDQQDRHVSKLIFCFFVFGAVLLCVGVLLSIFGFQACQYKPLPDCPMVLKVAGPACAVVGLGAVILARSRAQLQLRAGLQRGQQMDPDRAFICGESRQFAQCLIFGFLFLTSGMLISVLGIWVPGCGSNWAQEPLNETDTGDSEPRMCGFLSLQIMGPLIVLVGLCFFVVAHVKKRNTLNAGQDASEREEGQIQIMEPVQVTVGDSVIIFPPPPPPYFPESSASAVAESPGTNSLLPNENPPSYYSIFNYGRTPTSEGAASERDCESIYTISGTNSSSEASHTPHLPSELPPRYEEKENAAATFLPLSSEPSPP</sequence>
<proteinExistence type="evidence at protein level"/>
<comment type="interaction">
    <interactant intactId="EBI-10264837">
        <id>Q8WVE6</id>
    </interactant>
    <interactant intactId="EBI-10264833">
        <id>Q8N108-14</id>
        <label>MIER1</label>
    </interactant>
    <organismsDiffer>false</organismsDiffer>
    <experiments>3</experiments>
</comment>
<comment type="interaction">
    <interactant intactId="EBI-25874374">
        <id>Q8WVE6-2</id>
    </interactant>
    <interactant intactId="EBI-21591415">
        <id>P13473-2</id>
        <label>LAMP2</label>
    </interactant>
    <organismsDiffer>false</organismsDiffer>
    <experiments>3</experiments>
</comment>
<comment type="interaction">
    <interactant intactId="EBI-25874374">
        <id>Q8WVE6-2</id>
    </interactant>
    <interactant intactId="EBI-5280197">
        <id>O75400-2</id>
        <label>PRPF40A</label>
    </interactant>
    <organismsDiffer>false</organismsDiffer>
    <experiments>3</experiments>
</comment>
<comment type="interaction">
    <interactant intactId="EBI-25874374">
        <id>Q8WVE6-2</id>
    </interactant>
    <interactant intactId="EBI-2623095">
        <id>Q9Y371</id>
        <label>SH3GLB1</label>
    </interactant>
    <organismsDiffer>false</organismsDiffer>
    <experiments>3</experiments>
</comment>
<comment type="subcellular location">
    <subcellularLocation>
        <location evidence="6">Membrane</location>
        <topology evidence="6">Multi-pass membrane protein</topology>
    </subcellularLocation>
</comment>
<comment type="alternative products">
    <event type="alternative splicing"/>
    <isoform>
        <id>Q8WVE6-1</id>
        <name>1</name>
        <sequence type="displayed"/>
    </isoform>
    <isoform>
        <id>Q8WVE6-2</id>
        <name>2</name>
        <sequence type="described" ref="VSP_020520"/>
    </isoform>
</comment>
<comment type="sequence caution" evidence="6">
    <conflict type="erroneous gene model prediction">
        <sequence resource="EMBL-CDS" id="BAB89327"/>
    </conflict>
</comment>
<accession>Q8WVE6</accession>
<accession>Q8N0S1</accession>
<accession>Q8TDT7</accession>
<protein>
    <recommendedName>
        <fullName>Transmembrane protein 171</fullName>
    </recommendedName>
</protein>